<dbReference type="EC" id="1.7.1.7" evidence="2"/>
<dbReference type="EMBL" id="AK031004">
    <property type="protein sequence ID" value="BAC27211.1"/>
    <property type="molecule type" value="mRNA"/>
</dbReference>
<dbReference type="EMBL" id="AK075772">
    <property type="protein sequence ID" value="BAC35946.1"/>
    <property type="molecule type" value="mRNA"/>
</dbReference>
<dbReference type="EMBL" id="CH466535">
    <property type="protein sequence ID" value="EDL36258.1"/>
    <property type="molecule type" value="Genomic_DNA"/>
</dbReference>
<dbReference type="EMBL" id="BC003886">
    <property type="protein sequence ID" value="AAH03886.1"/>
    <property type="molecule type" value="mRNA"/>
</dbReference>
<dbReference type="EMBL" id="BC024109">
    <property type="protein sequence ID" value="AAH24109.1"/>
    <property type="molecule type" value="mRNA"/>
</dbReference>
<dbReference type="CCDS" id="CCDS27124.1"/>
<dbReference type="RefSeq" id="NP_818773.1">
    <property type="nucleotide sequence ID" value="NM_177992.2"/>
</dbReference>
<dbReference type="RefSeq" id="XP_006518429.1">
    <property type="nucleotide sequence ID" value="XM_006518366.3"/>
</dbReference>
<dbReference type="SMR" id="Q99L27"/>
<dbReference type="BioGRID" id="222860">
    <property type="interactions" value="2"/>
</dbReference>
<dbReference type="FunCoup" id="Q99L27">
    <property type="interactions" value="2393"/>
</dbReference>
<dbReference type="STRING" id="10090.ENSMUSP00000002397"/>
<dbReference type="iPTMnet" id="Q99L27"/>
<dbReference type="PhosphoSitePlus" id="Q99L27"/>
<dbReference type="SwissPalm" id="Q99L27"/>
<dbReference type="jPOST" id="Q99L27"/>
<dbReference type="PaxDb" id="10090-ENSMUSP00000002397"/>
<dbReference type="PeptideAtlas" id="Q99L27"/>
<dbReference type="ProteomicsDB" id="267637"/>
<dbReference type="Pumba" id="Q99L27"/>
<dbReference type="Antibodypedia" id="61">
    <property type="antibodies" value="108 antibodies from 17 providers"/>
</dbReference>
<dbReference type="DNASU" id="105446"/>
<dbReference type="Ensembl" id="ENSMUST00000002397.7">
    <property type="protein sequence ID" value="ENSMUSP00000002397.6"/>
    <property type="gene ID" value="ENSMUSG00000002326.7"/>
</dbReference>
<dbReference type="GeneID" id="105446"/>
<dbReference type="KEGG" id="mmu:105446"/>
<dbReference type="UCSC" id="uc007uae.1">
    <property type="organism name" value="mouse"/>
</dbReference>
<dbReference type="AGR" id="MGI:1917903"/>
<dbReference type="CTD" id="51292"/>
<dbReference type="MGI" id="MGI:1917903">
    <property type="gene designation" value="Gmpr2"/>
</dbReference>
<dbReference type="VEuPathDB" id="HostDB:ENSMUSG00000002326"/>
<dbReference type="eggNOG" id="KOG2550">
    <property type="taxonomic scope" value="Eukaryota"/>
</dbReference>
<dbReference type="GeneTree" id="ENSGT00940000159574"/>
<dbReference type="HOGENOM" id="CLU_022552_5_3_1"/>
<dbReference type="InParanoid" id="Q99L27"/>
<dbReference type="OMA" id="IVWRQNS"/>
<dbReference type="OrthoDB" id="418595at2759"/>
<dbReference type="PhylomeDB" id="Q99L27"/>
<dbReference type="TreeFam" id="TF300378"/>
<dbReference type="Reactome" id="R-MMU-74217">
    <property type="pathway name" value="Purine salvage"/>
</dbReference>
<dbReference type="BioGRID-ORCS" id="105446">
    <property type="hits" value="2 hits in 78 CRISPR screens"/>
</dbReference>
<dbReference type="ChiTaRS" id="Gmpr2">
    <property type="organism name" value="mouse"/>
</dbReference>
<dbReference type="PRO" id="PR:Q99L27"/>
<dbReference type="Proteomes" id="UP000000589">
    <property type="component" value="Chromosome 14"/>
</dbReference>
<dbReference type="RNAct" id="Q99L27">
    <property type="molecule type" value="protein"/>
</dbReference>
<dbReference type="Bgee" id="ENSMUSG00000002326">
    <property type="expression patterns" value="Expressed in spermatocyte and 260 other cell types or tissues"/>
</dbReference>
<dbReference type="ExpressionAtlas" id="Q99L27">
    <property type="expression patterns" value="baseline and differential"/>
</dbReference>
<dbReference type="GO" id="GO:1902560">
    <property type="term" value="C:GMP reductase complex"/>
    <property type="evidence" value="ECO:0007669"/>
    <property type="project" value="InterPro"/>
</dbReference>
<dbReference type="GO" id="GO:0003920">
    <property type="term" value="F:GMP reductase activity"/>
    <property type="evidence" value="ECO:0000250"/>
    <property type="project" value="UniProtKB"/>
</dbReference>
<dbReference type="GO" id="GO:0046872">
    <property type="term" value="F:metal ion binding"/>
    <property type="evidence" value="ECO:0007669"/>
    <property type="project" value="UniProtKB-KW"/>
</dbReference>
<dbReference type="GO" id="GO:0046038">
    <property type="term" value="P:GMP catabolic process"/>
    <property type="evidence" value="ECO:0000266"/>
    <property type="project" value="MGI"/>
</dbReference>
<dbReference type="GO" id="GO:0046037">
    <property type="term" value="P:GMP metabolic process"/>
    <property type="evidence" value="ECO:0000250"/>
    <property type="project" value="UniProtKB"/>
</dbReference>
<dbReference type="GO" id="GO:0032264">
    <property type="term" value="P:IMP salvage"/>
    <property type="evidence" value="ECO:0000304"/>
    <property type="project" value="MGI"/>
</dbReference>
<dbReference type="GO" id="GO:0030224">
    <property type="term" value="P:monocyte differentiation"/>
    <property type="evidence" value="ECO:0000266"/>
    <property type="project" value="MGI"/>
</dbReference>
<dbReference type="GO" id="GO:0006144">
    <property type="term" value="P:purine nucleobase metabolic process"/>
    <property type="evidence" value="ECO:0007669"/>
    <property type="project" value="UniProtKB-KW"/>
</dbReference>
<dbReference type="CDD" id="cd00381">
    <property type="entry name" value="IMPDH"/>
    <property type="match status" value="1"/>
</dbReference>
<dbReference type="FunFam" id="3.20.20.70:FF:000012">
    <property type="entry name" value="GMP reductase"/>
    <property type="match status" value="1"/>
</dbReference>
<dbReference type="Gene3D" id="3.20.20.70">
    <property type="entry name" value="Aldolase class I"/>
    <property type="match status" value="1"/>
</dbReference>
<dbReference type="HAMAP" id="MF_00596">
    <property type="entry name" value="GMP_reduct_type1"/>
    <property type="match status" value="1"/>
</dbReference>
<dbReference type="InterPro" id="IPR013785">
    <property type="entry name" value="Aldolase_TIM"/>
</dbReference>
<dbReference type="InterPro" id="IPR050139">
    <property type="entry name" value="GMP_reductase"/>
</dbReference>
<dbReference type="InterPro" id="IPR005993">
    <property type="entry name" value="GMPR"/>
</dbReference>
<dbReference type="InterPro" id="IPR015875">
    <property type="entry name" value="IMP_DH/GMP_Rdtase_CS"/>
</dbReference>
<dbReference type="InterPro" id="IPR001093">
    <property type="entry name" value="IMP_DH_GMPRt"/>
</dbReference>
<dbReference type="NCBIfam" id="TIGR01305">
    <property type="entry name" value="GMP_reduct_1"/>
    <property type="match status" value="1"/>
</dbReference>
<dbReference type="NCBIfam" id="NF003470">
    <property type="entry name" value="PRK05096.1"/>
    <property type="match status" value="1"/>
</dbReference>
<dbReference type="PANTHER" id="PTHR43170">
    <property type="entry name" value="GMP REDUCTASE"/>
    <property type="match status" value="1"/>
</dbReference>
<dbReference type="PANTHER" id="PTHR43170:SF4">
    <property type="entry name" value="GMP REDUCTASE 2"/>
    <property type="match status" value="1"/>
</dbReference>
<dbReference type="Pfam" id="PF00478">
    <property type="entry name" value="IMPDH"/>
    <property type="match status" value="1"/>
</dbReference>
<dbReference type="PIRSF" id="PIRSF000235">
    <property type="entry name" value="GMP_reductase"/>
    <property type="match status" value="1"/>
</dbReference>
<dbReference type="SMART" id="SM01240">
    <property type="entry name" value="IMPDH"/>
    <property type="match status" value="1"/>
</dbReference>
<dbReference type="SUPFAM" id="SSF51412">
    <property type="entry name" value="Inosine monophosphate dehydrogenase (IMPDH)"/>
    <property type="match status" value="1"/>
</dbReference>
<dbReference type="PROSITE" id="PS00487">
    <property type="entry name" value="IMP_DH_GMP_RED"/>
    <property type="match status" value="1"/>
</dbReference>
<reference key="1">
    <citation type="journal article" date="2005" name="Science">
        <title>The transcriptional landscape of the mammalian genome.</title>
        <authorList>
            <person name="Carninci P."/>
            <person name="Kasukawa T."/>
            <person name="Katayama S."/>
            <person name="Gough J."/>
            <person name="Frith M.C."/>
            <person name="Maeda N."/>
            <person name="Oyama R."/>
            <person name="Ravasi T."/>
            <person name="Lenhard B."/>
            <person name="Wells C."/>
            <person name="Kodzius R."/>
            <person name="Shimokawa K."/>
            <person name="Bajic V.B."/>
            <person name="Brenner S.E."/>
            <person name="Batalov S."/>
            <person name="Forrest A.R."/>
            <person name="Zavolan M."/>
            <person name="Davis M.J."/>
            <person name="Wilming L.G."/>
            <person name="Aidinis V."/>
            <person name="Allen J.E."/>
            <person name="Ambesi-Impiombato A."/>
            <person name="Apweiler R."/>
            <person name="Aturaliya R.N."/>
            <person name="Bailey T.L."/>
            <person name="Bansal M."/>
            <person name="Baxter L."/>
            <person name="Beisel K.W."/>
            <person name="Bersano T."/>
            <person name="Bono H."/>
            <person name="Chalk A.M."/>
            <person name="Chiu K.P."/>
            <person name="Choudhary V."/>
            <person name="Christoffels A."/>
            <person name="Clutterbuck D.R."/>
            <person name="Crowe M.L."/>
            <person name="Dalla E."/>
            <person name="Dalrymple B.P."/>
            <person name="de Bono B."/>
            <person name="Della Gatta G."/>
            <person name="di Bernardo D."/>
            <person name="Down T."/>
            <person name="Engstrom P."/>
            <person name="Fagiolini M."/>
            <person name="Faulkner G."/>
            <person name="Fletcher C.F."/>
            <person name="Fukushima T."/>
            <person name="Furuno M."/>
            <person name="Futaki S."/>
            <person name="Gariboldi M."/>
            <person name="Georgii-Hemming P."/>
            <person name="Gingeras T.R."/>
            <person name="Gojobori T."/>
            <person name="Green R.E."/>
            <person name="Gustincich S."/>
            <person name="Harbers M."/>
            <person name="Hayashi Y."/>
            <person name="Hensch T.K."/>
            <person name="Hirokawa N."/>
            <person name="Hill D."/>
            <person name="Huminiecki L."/>
            <person name="Iacono M."/>
            <person name="Ikeo K."/>
            <person name="Iwama A."/>
            <person name="Ishikawa T."/>
            <person name="Jakt M."/>
            <person name="Kanapin A."/>
            <person name="Katoh M."/>
            <person name="Kawasawa Y."/>
            <person name="Kelso J."/>
            <person name="Kitamura H."/>
            <person name="Kitano H."/>
            <person name="Kollias G."/>
            <person name="Krishnan S.P."/>
            <person name="Kruger A."/>
            <person name="Kummerfeld S.K."/>
            <person name="Kurochkin I.V."/>
            <person name="Lareau L.F."/>
            <person name="Lazarevic D."/>
            <person name="Lipovich L."/>
            <person name="Liu J."/>
            <person name="Liuni S."/>
            <person name="McWilliam S."/>
            <person name="Madan Babu M."/>
            <person name="Madera M."/>
            <person name="Marchionni L."/>
            <person name="Matsuda H."/>
            <person name="Matsuzawa S."/>
            <person name="Miki H."/>
            <person name="Mignone F."/>
            <person name="Miyake S."/>
            <person name="Morris K."/>
            <person name="Mottagui-Tabar S."/>
            <person name="Mulder N."/>
            <person name="Nakano N."/>
            <person name="Nakauchi H."/>
            <person name="Ng P."/>
            <person name="Nilsson R."/>
            <person name="Nishiguchi S."/>
            <person name="Nishikawa S."/>
            <person name="Nori F."/>
            <person name="Ohara O."/>
            <person name="Okazaki Y."/>
            <person name="Orlando V."/>
            <person name="Pang K.C."/>
            <person name="Pavan W.J."/>
            <person name="Pavesi G."/>
            <person name="Pesole G."/>
            <person name="Petrovsky N."/>
            <person name="Piazza S."/>
            <person name="Reed J."/>
            <person name="Reid J.F."/>
            <person name="Ring B.Z."/>
            <person name="Ringwald M."/>
            <person name="Rost B."/>
            <person name="Ruan Y."/>
            <person name="Salzberg S.L."/>
            <person name="Sandelin A."/>
            <person name="Schneider C."/>
            <person name="Schoenbach C."/>
            <person name="Sekiguchi K."/>
            <person name="Semple C.A."/>
            <person name="Seno S."/>
            <person name="Sessa L."/>
            <person name="Sheng Y."/>
            <person name="Shibata Y."/>
            <person name="Shimada H."/>
            <person name="Shimada K."/>
            <person name="Silva D."/>
            <person name="Sinclair B."/>
            <person name="Sperling S."/>
            <person name="Stupka E."/>
            <person name="Sugiura K."/>
            <person name="Sultana R."/>
            <person name="Takenaka Y."/>
            <person name="Taki K."/>
            <person name="Tammoja K."/>
            <person name="Tan S.L."/>
            <person name="Tang S."/>
            <person name="Taylor M.S."/>
            <person name="Tegner J."/>
            <person name="Teichmann S.A."/>
            <person name="Ueda H.R."/>
            <person name="van Nimwegen E."/>
            <person name="Verardo R."/>
            <person name="Wei C.L."/>
            <person name="Yagi K."/>
            <person name="Yamanishi H."/>
            <person name="Zabarovsky E."/>
            <person name="Zhu S."/>
            <person name="Zimmer A."/>
            <person name="Hide W."/>
            <person name="Bult C."/>
            <person name="Grimmond S.M."/>
            <person name="Teasdale R.D."/>
            <person name="Liu E.T."/>
            <person name="Brusic V."/>
            <person name="Quackenbush J."/>
            <person name="Wahlestedt C."/>
            <person name="Mattick J.S."/>
            <person name="Hume D.A."/>
            <person name="Kai C."/>
            <person name="Sasaki D."/>
            <person name="Tomaru Y."/>
            <person name="Fukuda S."/>
            <person name="Kanamori-Katayama M."/>
            <person name="Suzuki M."/>
            <person name="Aoki J."/>
            <person name="Arakawa T."/>
            <person name="Iida J."/>
            <person name="Imamura K."/>
            <person name="Itoh M."/>
            <person name="Kato T."/>
            <person name="Kawaji H."/>
            <person name="Kawagashira N."/>
            <person name="Kawashima T."/>
            <person name="Kojima M."/>
            <person name="Kondo S."/>
            <person name="Konno H."/>
            <person name="Nakano K."/>
            <person name="Ninomiya N."/>
            <person name="Nishio T."/>
            <person name="Okada M."/>
            <person name="Plessy C."/>
            <person name="Shibata K."/>
            <person name="Shiraki T."/>
            <person name="Suzuki S."/>
            <person name="Tagami M."/>
            <person name="Waki K."/>
            <person name="Watahiki A."/>
            <person name="Okamura-Oho Y."/>
            <person name="Suzuki H."/>
            <person name="Kawai J."/>
            <person name="Hayashizaki Y."/>
        </authorList>
    </citation>
    <scope>NUCLEOTIDE SEQUENCE [LARGE SCALE MRNA]</scope>
    <source>
        <strain>C57BL/6J</strain>
        <tissue>Pancreas</tissue>
        <tissue>Thymus</tissue>
    </source>
</reference>
<reference key="2">
    <citation type="submission" date="2005-09" db="EMBL/GenBank/DDBJ databases">
        <authorList>
            <person name="Mural R.J."/>
            <person name="Adams M.D."/>
            <person name="Myers E.W."/>
            <person name="Smith H.O."/>
            <person name="Venter J.C."/>
        </authorList>
    </citation>
    <scope>NUCLEOTIDE SEQUENCE [LARGE SCALE GENOMIC DNA]</scope>
</reference>
<reference key="3">
    <citation type="journal article" date="2004" name="Genome Res.">
        <title>The status, quality, and expansion of the NIH full-length cDNA project: the Mammalian Gene Collection (MGC).</title>
        <authorList>
            <consortium name="The MGC Project Team"/>
        </authorList>
    </citation>
    <scope>NUCLEOTIDE SEQUENCE [LARGE SCALE MRNA]</scope>
</reference>
<reference key="4">
    <citation type="journal article" date="2010" name="Cell">
        <title>A tissue-specific atlas of mouse protein phosphorylation and expression.</title>
        <authorList>
            <person name="Huttlin E.L."/>
            <person name="Jedrychowski M.P."/>
            <person name="Elias J.E."/>
            <person name="Goswami T."/>
            <person name="Rad R."/>
            <person name="Beausoleil S.A."/>
            <person name="Villen J."/>
            <person name="Haas W."/>
            <person name="Sowa M.E."/>
            <person name="Gygi S.P."/>
        </authorList>
    </citation>
    <scope>IDENTIFICATION BY MASS SPECTROMETRY [LARGE SCALE ANALYSIS]</scope>
    <source>
        <tissue>Brain</tissue>
        <tissue>Brown adipose tissue</tissue>
        <tissue>Kidney</tissue>
        <tissue>Lung</tissue>
        <tissue>Spleen</tissue>
        <tissue>Testis</tissue>
    </source>
</reference>
<organism>
    <name type="scientific">Mus musculus</name>
    <name type="common">Mouse</name>
    <dbReference type="NCBI Taxonomy" id="10090"/>
    <lineage>
        <taxon>Eukaryota</taxon>
        <taxon>Metazoa</taxon>
        <taxon>Chordata</taxon>
        <taxon>Craniata</taxon>
        <taxon>Vertebrata</taxon>
        <taxon>Euteleostomi</taxon>
        <taxon>Mammalia</taxon>
        <taxon>Eutheria</taxon>
        <taxon>Euarchontoglires</taxon>
        <taxon>Glires</taxon>
        <taxon>Rodentia</taxon>
        <taxon>Myomorpha</taxon>
        <taxon>Muroidea</taxon>
        <taxon>Muridae</taxon>
        <taxon>Murinae</taxon>
        <taxon>Mus</taxon>
        <taxon>Mus</taxon>
    </lineage>
</organism>
<keyword id="KW-0007">Acetylation</keyword>
<keyword id="KW-0479">Metal-binding</keyword>
<keyword id="KW-0521">NADP</keyword>
<keyword id="KW-0560">Oxidoreductase</keyword>
<keyword id="KW-0630">Potassium</keyword>
<keyword id="KW-0659">Purine metabolism</keyword>
<keyword id="KW-1185">Reference proteome</keyword>
<evidence type="ECO:0000250" key="1">
    <source>
        <dbReference type="UniProtKB" id="Q9P2T1"/>
    </source>
</evidence>
<evidence type="ECO:0000255" key="2">
    <source>
        <dbReference type="HAMAP-Rule" id="MF_03195"/>
    </source>
</evidence>
<evidence type="ECO:0000305" key="3"/>
<comment type="function">
    <text evidence="1 2">Catalyzes the irreversible NADPH-dependent deamination of GMP to IMP. It functions in the conversion of nucleobase, nucleoside and nucleotide derivatives of G to A nucleotides, and in maintaining the intracellular balance of A and G nucleotides (Probable). Plays a role in modulating cellular differentiation (By similarity).</text>
</comment>
<comment type="catalytic activity">
    <reaction evidence="2">
        <text>IMP + NH4(+) + NADP(+) = GMP + NADPH + 2 H(+)</text>
        <dbReference type="Rhea" id="RHEA:17185"/>
        <dbReference type="ChEBI" id="CHEBI:15378"/>
        <dbReference type="ChEBI" id="CHEBI:28938"/>
        <dbReference type="ChEBI" id="CHEBI:57783"/>
        <dbReference type="ChEBI" id="CHEBI:58053"/>
        <dbReference type="ChEBI" id="CHEBI:58115"/>
        <dbReference type="ChEBI" id="CHEBI:58349"/>
        <dbReference type="EC" id="1.7.1.7"/>
    </reaction>
</comment>
<comment type="subunit">
    <text evidence="2">Homotetramer.</text>
</comment>
<comment type="similarity">
    <text evidence="2">Belongs to the IMPDH/GMPR family. GuaC type 1 subfamily.</text>
</comment>
<proteinExistence type="evidence at protein level"/>
<name>GMPR2_MOUSE</name>
<feature type="chain" id="PRO_0000093727" description="GMP reductase 2">
    <location>
        <begin position="1"/>
        <end position="348"/>
    </location>
</feature>
<feature type="active site" description="Thioimidate intermediate" evidence="2">
    <location>
        <position position="186"/>
    </location>
</feature>
<feature type="active site" description="Proton donor/acceptor" evidence="2">
    <location>
        <position position="188"/>
    </location>
</feature>
<feature type="binding site" evidence="2">
    <location>
        <begin position="26"/>
        <end position="27"/>
    </location>
    <ligand>
        <name>NADP(+)</name>
        <dbReference type="ChEBI" id="CHEBI:58349"/>
        <note>ligand shared between two neighboring subunits</note>
    </ligand>
</feature>
<feature type="binding site" description="in other chain" evidence="2">
    <location>
        <position position="78"/>
    </location>
    <ligand>
        <name>NADP(+)</name>
        <dbReference type="ChEBI" id="CHEBI:58349"/>
        <note>ligand shared between two neighboring subunits</note>
    </ligand>
</feature>
<feature type="binding site" description="in other chain" evidence="2">
    <location>
        <begin position="129"/>
        <end position="131"/>
    </location>
    <ligand>
        <name>NADP(+)</name>
        <dbReference type="ChEBI" id="CHEBI:58349"/>
        <note>ligand shared between two neighboring subunits</note>
    </ligand>
</feature>
<feature type="binding site" description="in other chain" evidence="2">
    <location>
        <begin position="180"/>
        <end position="181"/>
    </location>
    <ligand>
        <name>NADP(+)</name>
        <dbReference type="ChEBI" id="CHEBI:58349"/>
        <note>ligand shared between two neighboring subunits</note>
    </ligand>
</feature>
<feature type="binding site" evidence="2">
    <location>
        <position position="181"/>
    </location>
    <ligand>
        <name>K(+)</name>
        <dbReference type="ChEBI" id="CHEBI:29103"/>
    </ligand>
</feature>
<feature type="binding site" evidence="2">
    <location>
        <position position="183"/>
    </location>
    <ligand>
        <name>K(+)</name>
        <dbReference type="ChEBI" id="CHEBI:29103"/>
    </ligand>
</feature>
<feature type="binding site" evidence="2">
    <location>
        <position position="186"/>
    </location>
    <ligand>
        <name>K(+)</name>
        <dbReference type="ChEBI" id="CHEBI:29103"/>
    </ligand>
</feature>
<feature type="binding site" evidence="2">
    <location>
        <position position="189"/>
    </location>
    <ligand>
        <name>K(+)</name>
        <dbReference type="ChEBI" id="CHEBI:29103"/>
    </ligand>
</feature>
<feature type="binding site" evidence="2">
    <location>
        <begin position="219"/>
        <end position="221"/>
    </location>
    <ligand>
        <name>GMP</name>
        <dbReference type="ChEBI" id="CHEBI:58115"/>
    </ligand>
</feature>
<feature type="binding site" evidence="2">
    <location>
        <begin position="242"/>
        <end position="243"/>
    </location>
    <ligand>
        <name>GMP</name>
        <dbReference type="ChEBI" id="CHEBI:58115"/>
    </ligand>
</feature>
<feature type="binding site" evidence="2">
    <location>
        <begin position="268"/>
        <end position="270"/>
    </location>
    <ligand>
        <name>GMP</name>
        <dbReference type="ChEBI" id="CHEBI:58115"/>
    </ligand>
</feature>
<feature type="binding site" description="in other chain" evidence="2">
    <location>
        <position position="269"/>
    </location>
    <ligand>
        <name>NADP(+)</name>
        <dbReference type="ChEBI" id="CHEBI:58349"/>
        <note>ligand shared between two neighboring subunits</note>
    </ligand>
</feature>
<feature type="binding site" description="in other chain" evidence="2">
    <location>
        <begin position="285"/>
        <end position="286"/>
    </location>
    <ligand>
        <name>NADP(+)</name>
        <dbReference type="ChEBI" id="CHEBI:58349"/>
        <note>ligand shared between two neighboring subunits</note>
    </ligand>
</feature>
<feature type="binding site" evidence="2">
    <location>
        <begin position="286"/>
        <end position="290"/>
    </location>
    <ligand>
        <name>GMP</name>
        <dbReference type="ChEBI" id="CHEBI:58115"/>
    </ligand>
</feature>
<feature type="binding site" evidence="2">
    <location>
        <begin position="314"/>
        <end position="317"/>
    </location>
    <ligand>
        <name>NADP(+)</name>
        <dbReference type="ChEBI" id="CHEBI:58349"/>
        <note>ligand shared between two neighboring subunits</note>
    </ligand>
</feature>
<feature type="modified residue" description="N6-acetyllysine" evidence="1">
    <location>
        <position position="291"/>
    </location>
</feature>
<feature type="sequence conflict" description="In Ref. 3; AAH03886." evidence="3" ref="3">
    <original>S</original>
    <variation>T</variation>
    <location>
        <position position="105"/>
    </location>
</feature>
<accession>Q99L27</accession>
<accession>Q542X2</accession>
<accession>Q8R1T5</accession>
<protein>
    <recommendedName>
        <fullName evidence="2">GMP reductase 2</fullName>
        <shortName evidence="2">GMPR 2</shortName>
        <ecNumber evidence="2">1.7.1.7</ecNumber>
    </recommendedName>
    <alternativeName>
        <fullName evidence="2">Guanosine 5'-monophosphate oxidoreductase 2</fullName>
        <shortName evidence="2">Guanosine monophosphate reductase 2</shortName>
    </alternativeName>
</protein>
<sequence length="348" mass="38019">MPHIDNDVKLDFKDVLLRPKRSTLKSRSEVELTRSFSFRNSKQMYSGIPVIAANMDTVGTFEMARVLCKFSLFTAIHKHYSIHQWQEFASQNPDCLECLAASSGSGSADFEQLEQILEAIPQVKYICLDVANGYSEHFVEFVKDVRKRFPQHTIMAGNVVTGEMVEELILSGADIIKVGIGPGSVCTTRKKTGVGYPQLSAVMECADAAHGLKGHIISDGGCSCPGDVAKAFGAGADFVMLGGMLAGHSESGGELIERDGKKYKLFYGMSSEMAMKKYSGGVAEYRASEGKIVEVPFKGDVEHTIRDILGGIRSTCTYVGAAKLKELSRRTTFIRVTQQVNPIFSNSQ</sequence>
<gene>
    <name evidence="2" type="primary">Gmpr2</name>
</gene>